<accession>Q8GLE6</accession>
<accession>D3VLM6</accession>
<sequence>MSISLTESAAQRIVAFLDNRGKGVGLRLGVRTSGCSGMAYVLEFADVVNEEDQVFEDKGVKVIVDGKSILYLDGTELDFVKEGLNEGFKFNNPNVSSECGCGESFHV</sequence>
<gene>
    <name evidence="1" type="primary">iscA</name>
    <name type="ordered locus">XNC1_3300</name>
</gene>
<feature type="chain" id="PRO_0000077006" description="Iron-binding protein IscA">
    <location>
        <begin position="1"/>
        <end position="107"/>
    </location>
</feature>
<feature type="binding site" evidence="1">
    <location>
        <position position="35"/>
    </location>
    <ligand>
        <name>Fe cation</name>
        <dbReference type="ChEBI" id="CHEBI:24875"/>
    </ligand>
</feature>
<feature type="binding site" evidence="1">
    <location>
        <position position="99"/>
    </location>
    <ligand>
        <name>Fe cation</name>
        <dbReference type="ChEBI" id="CHEBI:24875"/>
    </ligand>
</feature>
<feature type="binding site" evidence="1">
    <location>
        <position position="101"/>
    </location>
    <ligand>
        <name>Fe cation</name>
        <dbReference type="ChEBI" id="CHEBI:24875"/>
    </ligand>
</feature>
<comment type="function">
    <text evidence="1">Is able to transfer iron-sulfur clusters to apo-ferredoxin. Multiple cycles of [2Fe2S] cluster formation and transfer are observed, suggesting that IscA acts catalytically. Recruits intracellular free iron so as to provide iron for the assembly of transient iron-sulfur cluster in IscU in the presence of IscS, L-cysteine and the thioredoxin reductase system TrxA/TrxB.</text>
</comment>
<comment type="cofactor">
    <cofactor evidence="1">
        <name>Fe cation</name>
        <dbReference type="ChEBI" id="CHEBI:24875"/>
    </cofactor>
    <text evidence="1">Binds 2 iron ions per dimer. The dimer may bind additional iron ions.</text>
</comment>
<comment type="subunit">
    <text evidence="1">Homodimer; may form tetramers and higher multimers.</text>
</comment>
<comment type="miscellaneous">
    <text>A transposon insertion between iscA and hscB prevents colonization of the nematode Steinernema carpocapsae. The insertion disrupts cotranscription of iscA and hscB but does not reduce hscBA expression, suggesting that coordinated expression of the isc-hsc-fdx locus is required for colonization.</text>
</comment>
<comment type="similarity">
    <text evidence="1">Belongs to the HesB/IscA family.</text>
</comment>
<reference key="1">
    <citation type="journal article" date="2003" name="J. Bacteriol.">
        <title>Xenorhabdus nematophila requires an intact iscRSUA-hscBA-fdx operon to colonize Steinernema carpocapsae nematodes.</title>
        <authorList>
            <person name="Martens E.C."/>
            <person name="Gawronski-Salerno J."/>
            <person name="Vokal D.L."/>
            <person name="Pellitteri M.C."/>
            <person name="Menard M.L."/>
            <person name="Goodrich-Blair H."/>
        </authorList>
    </citation>
    <scope>NUCLEOTIDE SEQUENCE [GENOMIC DNA]</scope>
    <source>
        <strain>ATCC 19061 / DSM 3370 / CCUG 14189 / LMG 1036 / NCIMB 9965 / AN6</strain>
    </source>
</reference>
<reference key="2">
    <citation type="journal article" date="2011" name="PLoS ONE">
        <title>The entomopathogenic bacterial endosymbionts xenorhabdus and photorhabdus: convergent lifestyles from divergent genomes.</title>
        <authorList>
            <person name="Chaston J.M."/>
            <person name="Suen G."/>
            <person name="Tucker S.L."/>
            <person name="Andersen A.W."/>
            <person name="Bhasin A."/>
            <person name="Bode E."/>
            <person name="Bode H.B."/>
            <person name="Brachmann A.O."/>
            <person name="Cowles C.E."/>
            <person name="Cowles K.N."/>
            <person name="Darby C."/>
            <person name="de Leon L."/>
            <person name="Drace K."/>
            <person name="Du Z."/>
            <person name="Givaudan A."/>
            <person name="Herbert Tran E.E."/>
            <person name="Jewell K.A."/>
            <person name="Knack J.J."/>
            <person name="Krasomil-Osterfeld K.C."/>
            <person name="Kukor R."/>
            <person name="Lanois A."/>
            <person name="Latreille P."/>
            <person name="Leimgruber N.K."/>
            <person name="Lipke C.M."/>
            <person name="Liu R."/>
            <person name="Lu X."/>
            <person name="Martens E.C."/>
            <person name="Marri P.R."/>
            <person name="Medigue C."/>
            <person name="Menard M.L."/>
            <person name="Miller N.M."/>
            <person name="Morales-Soto N."/>
            <person name="Norton S."/>
            <person name="Ogier J.C."/>
            <person name="Orchard S.S."/>
            <person name="Park D."/>
            <person name="Park Y."/>
            <person name="Qurollo B.A."/>
            <person name="Sugar D.R."/>
            <person name="Richards G.R."/>
            <person name="Rouy Z."/>
            <person name="Slominski B."/>
            <person name="Slominski K."/>
            <person name="Snyder H."/>
            <person name="Tjaden B.C."/>
            <person name="van der Hoeven R."/>
            <person name="Welch R.D."/>
            <person name="Wheeler C."/>
            <person name="Xiang B."/>
            <person name="Barbazuk B."/>
            <person name="Gaudriault S."/>
            <person name="Goodner B."/>
            <person name="Slater S.C."/>
            <person name="Forst S."/>
            <person name="Goldman B.S."/>
            <person name="Goodrich-Blair H."/>
        </authorList>
    </citation>
    <scope>NUCLEOTIDE SEQUENCE [LARGE SCALE GENOMIC DNA]</scope>
    <source>
        <strain>ATCC 19061 / DSM 3370 / CCUG 14189 / LMG 1036 / NCIMB 9965 / AN6</strain>
    </source>
</reference>
<protein>
    <recommendedName>
        <fullName evidence="1">Iron-binding protein IscA</fullName>
    </recommendedName>
    <alternativeName>
        <fullName evidence="1">Iron-sulfur cluster assembly protein</fullName>
    </alternativeName>
</protein>
<evidence type="ECO:0000255" key="1">
    <source>
        <dbReference type="HAMAP-Rule" id="MF_01429"/>
    </source>
</evidence>
<dbReference type="EMBL" id="AY138456">
    <property type="protein sequence ID" value="AAN17747.1"/>
    <property type="molecule type" value="Genomic_DNA"/>
</dbReference>
<dbReference type="EMBL" id="FN667742">
    <property type="protein sequence ID" value="CBJ91352.1"/>
    <property type="molecule type" value="Genomic_DNA"/>
</dbReference>
<dbReference type="RefSeq" id="WP_010847165.1">
    <property type="nucleotide sequence ID" value="NC_014228.1"/>
</dbReference>
<dbReference type="SMR" id="Q8GLE6"/>
<dbReference type="STRING" id="406817.XNC1_3300"/>
<dbReference type="GeneID" id="24904078"/>
<dbReference type="KEGG" id="xne:XNC1_3300"/>
<dbReference type="eggNOG" id="COG0316">
    <property type="taxonomic scope" value="Bacteria"/>
</dbReference>
<dbReference type="HOGENOM" id="CLU_069054_5_1_6"/>
<dbReference type="Proteomes" id="UP000008075">
    <property type="component" value="Chromosome"/>
</dbReference>
<dbReference type="GO" id="GO:0005829">
    <property type="term" value="C:cytosol"/>
    <property type="evidence" value="ECO:0007669"/>
    <property type="project" value="TreeGrafter"/>
</dbReference>
<dbReference type="GO" id="GO:0051537">
    <property type="term" value="F:2 iron, 2 sulfur cluster binding"/>
    <property type="evidence" value="ECO:0007669"/>
    <property type="project" value="UniProtKB-ARBA"/>
</dbReference>
<dbReference type="GO" id="GO:0005506">
    <property type="term" value="F:iron ion binding"/>
    <property type="evidence" value="ECO:0007669"/>
    <property type="project" value="UniProtKB-UniRule"/>
</dbReference>
<dbReference type="GO" id="GO:0016226">
    <property type="term" value="P:iron-sulfur cluster assembly"/>
    <property type="evidence" value="ECO:0007669"/>
    <property type="project" value="UniProtKB-UniRule"/>
</dbReference>
<dbReference type="FunFam" id="2.60.300.12:FF:000001">
    <property type="entry name" value="Iron-binding protein IscA"/>
    <property type="match status" value="1"/>
</dbReference>
<dbReference type="Gene3D" id="2.60.300.12">
    <property type="entry name" value="HesB-like domain"/>
    <property type="match status" value="1"/>
</dbReference>
<dbReference type="HAMAP" id="MF_01429">
    <property type="entry name" value="Fe_S_insert_IscA"/>
    <property type="match status" value="1"/>
</dbReference>
<dbReference type="InterPro" id="IPR050322">
    <property type="entry name" value="Fe-S_cluster_asmbl/transfer"/>
</dbReference>
<dbReference type="InterPro" id="IPR000361">
    <property type="entry name" value="FeS_biogenesis"/>
</dbReference>
<dbReference type="InterPro" id="IPR016092">
    <property type="entry name" value="FeS_cluster_insertion"/>
</dbReference>
<dbReference type="InterPro" id="IPR017870">
    <property type="entry name" value="FeS_cluster_insertion_CS"/>
</dbReference>
<dbReference type="InterPro" id="IPR035903">
    <property type="entry name" value="HesB-like_dom_sf"/>
</dbReference>
<dbReference type="InterPro" id="IPR011302">
    <property type="entry name" value="IscA_proteobacteria"/>
</dbReference>
<dbReference type="NCBIfam" id="TIGR00049">
    <property type="entry name" value="iron-sulfur cluster assembly accessory protein"/>
    <property type="match status" value="1"/>
</dbReference>
<dbReference type="NCBIfam" id="TIGR02011">
    <property type="entry name" value="IscA"/>
    <property type="match status" value="1"/>
</dbReference>
<dbReference type="NCBIfam" id="NF007049">
    <property type="entry name" value="PRK09502.1"/>
    <property type="match status" value="1"/>
</dbReference>
<dbReference type="PANTHER" id="PTHR10072:SF41">
    <property type="entry name" value="IRON-SULFUR CLUSTER ASSEMBLY 1 HOMOLOG, MITOCHONDRIAL"/>
    <property type="match status" value="1"/>
</dbReference>
<dbReference type="PANTHER" id="PTHR10072">
    <property type="entry name" value="IRON-SULFUR CLUSTER ASSEMBLY PROTEIN"/>
    <property type="match status" value="1"/>
</dbReference>
<dbReference type="Pfam" id="PF01521">
    <property type="entry name" value="Fe-S_biosyn"/>
    <property type="match status" value="1"/>
</dbReference>
<dbReference type="SUPFAM" id="SSF89360">
    <property type="entry name" value="HesB-like domain"/>
    <property type="match status" value="1"/>
</dbReference>
<dbReference type="PROSITE" id="PS01152">
    <property type="entry name" value="HESB"/>
    <property type="match status" value="1"/>
</dbReference>
<organism>
    <name type="scientific">Xenorhabdus nematophila (strain ATCC 19061 / DSM 3370 / CCUG 14189 / LMG 1036 / NCIMB 9965 / AN6)</name>
    <dbReference type="NCBI Taxonomy" id="406817"/>
    <lineage>
        <taxon>Bacteria</taxon>
        <taxon>Pseudomonadati</taxon>
        <taxon>Pseudomonadota</taxon>
        <taxon>Gammaproteobacteria</taxon>
        <taxon>Enterobacterales</taxon>
        <taxon>Morganellaceae</taxon>
        <taxon>Xenorhabdus</taxon>
    </lineage>
</organism>
<proteinExistence type="inferred from homology"/>
<name>ISCA_XENNA</name>
<keyword id="KW-0408">Iron</keyword>
<keyword id="KW-0479">Metal-binding</keyword>
<keyword id="KW-1185">Reference proteome</keyword>